<geneLocation type="chloroplast"/>
<organism>
    <name type="scientific">Pleurastrum terricola</name>
    <name type="common">Filamentous green alga</name>
    <name type="synonym">Leptosira terrestris</name>
    <dbReference type="NCBI Taxonomy" id="34116"/>
    <lineage>
        <taxon>Eukaryota</taxon>
        <taxon>Viridiplantae</taxon>
        <taxon>Chlorophyta</taxon>
        <taxon>core chlorophytes</taxon>
        <taxon>Chlorophyceae</taxon>
        <taxon>CS clade</taxon>
        <taxon>Chlamydomonadales</taxon>
        <taxon>Pleurastraceae</taxon>
        <taxon>Pleurastrum</taxon>
    </lineage>
</organism>
<evidence type="ECO:0000255" key="1">
    <source>
        <dbReference type="HAMAP-Rule" id="MF_00293"/>
    </source>
</evidence>
<gene>
    <name evidence="1" type="primary">psbN</name>
</gene>
<dbReference type="EMBL" id="EF506945">
    <property type="protein sequence ID" value="ABO69309.1"/>
    <property type="molecule type" value="Genomic_DNA"/>
</dbReference>
<dbReference type="RefSeq" id="YP_001382167.1">
    <property type="nucleotide sequence ID" value="NC_009681.1"/>
</dbReference>
<dbReference type="SMR" id="A6YG90"/>
<dbReference type="GeneID" id="5383830"/>
<dbReference type="GO" id="GO:0009535">
    <property type="term" value="C:chloroplast thylakoid membrane"/>
    <property type="evidence" value="ECO:0007669"/>
    <property type="project" value="UniProtKB-SubCell"/>
</dbReference>
<dbReference type="GO" id="GO:0015979">
    <property type="term" value="P:photosynthesis"/>
    <property type="evidence" value="ECO:0007669"/>
    <property type="project" value="InterPro"/>
</dbReference>
<dbReference type="HAMAP" id="MF_00293">
    <property type="entry name" value="PSII_PsbN"/>
    <property type="match status" value="1"/>
</dbReference>
<dbReference type="InterPro" id="IPR003398">
    <property type="entry name" value="PSII_PsbN"/>
</dbReference>
<dbReference type="PANTHER" id="PTHR35326">
    <property type="entry name" value="PROTEIN PSBN"/>
    <property type="match status" value="1"/>
</dbReference>
<dbReference type="PANTHER" id="PTHR35326:SF3">
    <property type="entry name" value="PROTEIN PSBN"/>
    <property type="match status" value="1"/>
</dbReference>
<dbReference type="Pfam" id="PF02468">
    <property type="entry name" value="PsbN"/>
    <property type="match status" value="1"/>
</dbReference>
<name>PSBN_PLETE</name>
<sequence length="44" mass="5003">METPAFFFTTFLGCLLLSITGYSIYVGFGPPSKQLRDPFEEHED</sequence>
<accession>A6YG90</accession>
<reference key="1">
    <citation type="journal article" date="2007" name="BMC Genomics">
        <title>The chloroplast genome sequence of the green alga Leptosira terrestris: multiple losses of the inverted repeat and extensive genome rearrangements within the Trebouxiophyceae.</title>
        <authorList>
            <person name="de Cambiaire J.-C."/>
            <person name="Otis C."/>
            <person name="Turmel M."/>
            <person name="Lemieux C."/>
        </authorList>
    </citation>
    <scope>NUCLEOTIDE SEQUENCE [LARGE SCALE GENOMIC DNA]</scope>
    <source>
        <strain>CCAP 463/2 / UTEX 333</strain>
    </source>
</reference>
<proteinExistence type="inferred from homology"/>
<keyword id="KW-0150">Chloroplast</keyword>
<keyword id="KW-0472">Membrane</keyword>
<keyword id="KW-0934">Plastid</keyword>
<keyword id="KW-0793">Thylakoid</keyword>
<keyword id="KW-0812">Transmembrane</keyword>
<keyword id="KW-1133">Transmembrane helix</keyword>
<comment type="function">
    <text evidence="1">May play a role in photosystem I and II biogenesis.</text>
</comment>
<comment type="subcellular location">
    <subcellularLocation>
        <location evidence="1">Plastid</location>
        <location evidence="1">Chloroplast thylakoid membrane</location>
        <topology evidence="1">Single-pass membrane protein</topology>
    </subcellularLocation>
</comment>
<comment type="similarity">
    <text evidence="1">Belongs to the PsbN family.</text>
</comment>
<comment type="caution">
    <text evidence="1">Originally thought to be a component of PSII; based on experiments in Synechocystis, N.tabacum and barley, and its absence from PSII in T.elongatus and T.vulcanus, this is probably not true.</text>
</comment>
<protein>
    <recommendedName>
        <fullName evidence="1">Protein PsbN</fullName>
    </recommendedName>
</protein>
<feature type="chain" id="PRO_0000362200" description="Protein PsbN">
    <location>
        <begin position="1"/>
        <end position="44"/>
    </location>
</feature>
<feature type="transmembrane region" description="Helical" evidence="1">
    <location>
        <begin position="7"/>
        <end position="29"/>
    </location>
</feature>